<dbReference type="EC" id="4.6.1.17" evidence="1"/>
<dbReference type="EMBL" id="AE017125">
    <property type="protein sequence ID" value="AAP76649.1"/>
    <property type="molecule type" value="Genomic_DNA"/>
</dbReference>
<dbReference type="RefSeq" id="WP_011114895.1">
    <property type="nucleotide sequence ID" value="NC_004917.1"/>
</dbReference>
<dbReference type="SMR" id="Q7VK40"/>
<dbReference type="STRING" id="235279.HH_0052"/>
<dbReference type="KEGG" id="hhe:HH_0052"/>
<dbReference type="eggNOG" id="COG0315">
    <property type="taxonomic scope" value="Bacteria"/>
</dbReference>
<dbReference type="HOGENOM" id="CLU_074693_1_1_7"/>
<dbReference type="OrthoDB" id="9794429at2"/>
<dbReference type="UniPathway" id="UPA00344"/>
<dbReference type="Proteomes" id="UP000002495">
    <property type="component" value="Chromosome"/>
</dbReference>
<dbReference type="GO" id="GO:0061799">
    <property type="term" value="F:cyclic pyranopterin monophosphate synthase activity"/>
    <property type="evidence" value="ECO:0007669"/>
    <property type="project" value="UniProtKB-UniRule"/>
</dbReference>
<dbReference type="GO" id="GO:0006777">
    <property type="term" value="P:Mo-molybdopterin cofactor biosynthetic process"/>
    <property type="evidence" value="ECO:0007669"/>
    <property type="project" value="UniProtKB-UniRule"/>
</dbReference>
<dbReference type="CDD" id="cd01420">
    <property type="entry name" value="MoaC_PE"/>
    <property type="match status" value="1"/>
</dbReference>
<dbReference type="Gene3D" id="3.30.70.640">
    <property type="entry name" value="Molybdopterin cofactor biosynthesis C (MoaC) domain"/>
    <property type="match status" value="1"/>
</dbReference>
<dbReference type="HAMAP" id="MF_01224_B">
    <property type="entry name" value="MoaC_B"/>
    <property type="match status" value="1"/>
</dbReference>
<dbReference type="InterPro" id="IPR023045">
    <property type="entry name" value="MoaC"/>
</dbReference>
<dbReference type="InterPro" id="IPR047594">
    <property type="entry name" value="MoaC_bact/euk"/>
</dbReference>
<dbReference type="InterPro" id="IPR036522">
    <property type="entry name" value="MoaC_sf"/>
</dbReference>
<dbReference type="InterPro" id="IPR002820">
    <property type="entry name" value="Mopterin_CF_biosynth-C_dom"/>
</dbReference>
<dbReference type="NCBIfam" id="TIGR00581">
    <property type="entry name" value="moaC"/>
    <property type="match status" value="1"/>
</dbReference>
<dbReference type="NCBIfam" id="NF006870">
    <property type="entry name" value="PRK09364.1"/>
    <property type="match status" value="1"/>
</dbReference>
<dbReference type="Pfam" id="PF01967">
    <property type="entry name" value="MoaC"/>
    <property type="match status" value="1"/>
</dbReference>
<dbReference type="SUPFAM" id="SSF55040">
    <property type="entry name" value="Molybdenum cofactor biosynthesis protein C, MoaC"/>
    <property type="match status" value="1"/>
</dbReference>
<organism>
    <name type="scientific">Helicobacter hepaticus (strain ATCC 51449 / 3B1)</name>
    <dbReference type="NCBI Taxonomy" id="235279"/>
    <lineage>
        <taxon>Bacteria</taxon>
        <taxon>Pseudomonadati</taxon>
        <taxon>Campylobacterota</taxon>
        <taxon>Epsilonproteobacteria</taxon>
        <taxon>Campylobacterales</taxon>
        <taxon>Helicobacteraceae</taxon>
        <taxon>Helicobacter</taxon>
    </lineage>
</organism>
<feature type="chain" id="PRO_1000054101" description="Cyclic pyranopterin monophosphate synthase">
    <location>
        <begin position="1"/>
        <end position="159"/>
    </location>
</feature>
<feature type="active site" evidence="1">
    <location>
        <position position="127"/>
    </location>
</feature>
<feature type="binding site" evidence="1">
    <location>
        <begin position="74"/>
        <end position="76"/>
    </location>
    <ligand>
        <name>substrate</name>
    </ligand>
</feature>
<feature type="binding site" evidence="1">
    <location>
        <begin position="112"/>
        <end position="113"/>
    </location>
    <ligand>
        <name>substrate</name>
    </ligand>
</feature>
<proteinExistence type="inferred from homology"/>
<comment type="function">
    <text evidence="1">Catalyzes the conversion of (8S)-3',8-cyclo-7,8-dihydroguanosine 5'-triphosphate to cyclic pyranopterin monophosphate (cPMP).</text>
</comment>
<comment type="catalytic activity">
    <reaction evidence="1">
        <text>(8S)-3',8-cyclo-7,8-dihydroguanosine 5'-triphosphate = cyclic pyranopterin phosphate + diphosphate</text>
        <dbReference type="Rhea" id="RHEA:49580"/>
        <dbReference type="ChEBI" id="CHEBI:33019"/>
        <dbReference type="ChEBI" id="CHEBI:59648"/>
        <dbReference type="ChEBI" id="CHEBI:131766"/>
        <dbReference type="EC" id="4.6.1.17"/>
    </reaction>
</comment>
<comment type="pathway">
    <text evidence="1">Cofactor biosynthesis; molybdopterin biosynthesis.</text>
</comment>
<comment type="subunit">
    <text evidence="1">Homohexamer; trimer of dimers.</text>
</comment>
<comment type="similarity">
    <text evidence="1">Belongs to the MoaC family.</text>
</comment>
<name>MOAC_HELHP</name>
<gene>
    <name evidence="1" type="primary">moaC</name>
    <name type="ordered locus">HH_0052</name>
</gene>
<sequence length="159" mass="17042">MQLTHLNKQNNPTMVDVSDKHITTREAYASGVISMSEQAFESAINHTGKKGPITQTAIIAAIMGSKKTSEIIPMCHPLMINKINVDITPNPAEHSITLGVLVKCEGKTGVEMEALTGVSIGLLTIYDMLKAIDKSMVISDIALQSKSGGKSGDFVREDS</sequence>
<evidence type="ECO:0000255" key="1">
    <source>
        <dbReference type="HAMAP-Rule" id="MF_01224"/>
    </source>
</evidence>
<protein>
    <recommendedName>
        <fullName evidence="1">Cyclic pyranopterin monophosphate synthase</fullName>
        <ecNumber evidence="1">4.6.1.17</ecNumber>
    </recommendedName>
    <alternativeName>
        <fullName evidence="1">Molybdenum cofactor biosynthesis protein C</fullName>
    </alternativeName>
</protein>
<keyword id="KW-0456">Lyase</keyword>
<keyword id="KW-0501">Molybdenum cofactor biosynthesis</keyword>
<keyword id="KW-1185">Reference proteome</keyword>
<accession>Q7VK40</accession>
<reference key="1">
    <citation type="journal article" date="2003" name="Proc. Natl. Acad. Sci. U.S.A.">
        <title>The complete genome sequence of the carcinogenic bacterium Helicobacter hepaticus.</title>
        <authorList>
            <person name="Suerbaum S."/>
            <person name="Josenhans C."/>
            <person name="Sterzenbach T."/>
            <person name="Drescher B."/>
            <person name="Brandt P."/>
            <person name="Bell M."/>
            <person name="Droege M."/>
            <person name="Fartmann B."/>
            <person name="Fischer H.-P."/>
            <person name="Ge Z."/>
            <person name="Hoerster A."/>
            <person name="Holland R."/>
            <person name="Klein K."/>
            <person name="Koenig J."/>
            <person name="Macko L."/>
            <person name="Mendz G.L."/>
            <person name="Nyakatura G."/>
            <person name="Schauer D.B."/>
            <person name="Shen Z."/>
            <person name="Weber J."/>
            <person name="Frosch M."/>
            <person name="Fox J.G."/>
        </authorList>
    </citation>
    <scope>NUCLEOTIDE SEQUENCE [LARGE SCALE GENOMIC DNA]</scope>
    <source>
        <strain>ATCC 51449 / 3B1</strain>
    </source>
</reference>